<organism>
    <name type="scientific">Equus caballus</name>
    <name type="common">Horse</name>
    <dbReference type="NCBI Taxonomy" id="9796"/>
    <lineage>
        <taxon>Eukaryota</taxon>
        <taxon>Metazoa</taxon>
        <taxon>Chordata</taxon>
        <taxon>Craniata</taxon>
        <taxon>Vertebrata</taxon>
        <taxon>Euteleostomi</taxon>
        <taxon>Mammalia</taxon>
        <taxon>Eutheria</taxon>
        <taxon>Laurasiatheria</taxon>
        <taxon>Perissodactyla</taxon>
        <taxon>Equidae</taxon>
        <taxon>Equus</taxon>
    </lineage>
</organism>
<dbReference type="EMBL" id="X69083">
    <property type="protein sequence ID" value="CAA48827.1"/>
    <property type="molecule type" value="mRNA"/>
</dbReference>
<dbReference type="EMBL" id="AY124653">
    <property type="protein sequence ID" value="AAM77008.1"/>
    <property type="molecule type" value="Genomic_DNA"/>
</dbReference>
<dbReference type="EMBL" id="AY124656">
    <property type="protein sequence ID" value="AAM77009.1"/>
    <property type="molecule type" value="Genomic_DNA"/>
</dbReference>
<dbReference type="EMBL" id="AY124654">
    <property type="protein sequence ID" value="AAM77009.1"/>
    <property type="status" value="JOINED"/>
    <property type="molecule type" value="Genomic_DNA"/>
</dbReference>
<dbReference type="EMBL" id="AY124655">
    <property type="protein sequence ID" value="AAM77009.1"/>
    <property type="status" value="JOINED"/>
    <property type="molecule type" value="Genomic_DNA"/>
</dbReference>
<dbReference type="EMBL" id="AY124659">
    <property type="protein sequence ID" value="AAM77010.1"/>
    <property type="molecule type" value="Genomic_DNA"/>
</dbReference>
<dbReference type="EMBL" id="AY124657">
    <property type="protein sequence ID" value="AAM77010.1"/>
    <property type="status" value="JOINED"/>
    <property type="molecule type" value="Genomic_DNA"/>
</dbReference>
<dbReference type="EMBL" id="AY124658">
    <property type="protein sequence ID" value="AAM77010.1"/>
    <property type="status" value="JOINED"/>
    <property type="molecule type" value="Genomic_DNA"/>
</dbReference>
<dbReference type="EMBL" id="AY124662">
    <property type="protein sequence ID" value="AAM77011.1"/>
    <property type="molecule type" value="Genomic_DNA"/>
</dbReference>
<dbReference type="EMBL" id="AY124660">
    <property type="protein sequence ID" value="AAM77011.1"/>
    <property type="status" value="JOINED"/>
    <property type="molecule type" value="Genomic_DNA"/>
</dbReference>
<dbReference type="EMBL" id="AY124661">
    <property type="protein sequence ID" value="AAM77011.1"/>
    <property type="status" value="JOINED"/>
    <property type="molecule type" value="Genomic_DNA"/>
</dbReference>
<dbReference type="EMBL" id="AY124665">
    <property type="protein sequence ID" value="AAM77012.1"/>
    <property type="molecule type" value="Genomic_DNA"/>
</dbReference>
<dbReference type="EMBL" id="AY124663">
    <property type="protein sequence ID" value="AAM77012.1"/>
    <property type="status" value="JOINED"/>
    <property type="molecule type" value="Genomic_DNA"/>
</dbReference>
<dbReference type="EMBL" id="AY124664">
    <property type="protein sequence ID" value="AAM77012.1"/>
    <property type="status" value="JOINED"/>
    <property type="molecule type" value="Genomic_DNA"/>
</dbReference>
<dbReference type="EMBL" id="AY124668">
    <property type="protein sequence ID" value="AAM77013.1"/>
    <property type="molecule type" value="Genomic_DNA"/>
</dbReference>
<dbReference type="EMBL" id="AY124666">
    <property type="protein sequence ID" value="AAM77013.1"/>
    <property type="status" value="JOINED"/>
    <property type="molecule type" value="Genomic_DNA"/>
</dbReference>
<dbReference type="EMBL" id="AY124667">
    <property type="protein sequence ID" value="AAM77013.1"/>
    <property type="status" value="JOINED"/>
    <property type="molecule type" value="Genomic_DNA"/>
</dbReference>
<dbReference type="EMBL" id="AY124671">
    <property type="protein sequence ID" value="AAM77014.1"/>
    <property type="molecule type" value="Genomic_DNA"/>
</dbReference>
<dbReference type="EMBL" id="AY124669">
    <property type="protein sequence ID" value="AAM77014.1"/>
    <property type="status" value="JOINED"/>
    <property type="molecule type" value="Genomic_DNA"/>
</dbReference>
<dbReference type="EMBL" id="AY124670">
    <property type="protein sequence ID" value="AAM77014.1"/>
    <property type="status" value="JOINED"/>
    <property type="molecule type" value="Genomic_DNA"/>
</dbReference>
<dbReference type="PIR" id="I46244">
    <property type="entry name" value="S30566"/>
</dbReference>
<dbReference type="RefSeq" id="NP_001075971.1">
    <property type="nucleotide sequence ID" value="NM_001082502.3"/>
</dbReference>
<dbReference type="RefSeq" id="XP_005602652.1">
    <property type="nucleotide sequence ID" value="XM_005602595.4"/>
</dbReference>
<dbReference type="SMR" id="P30441"/>
<dbReference type="FunCoup" id="P30441">
    <property type="interactions" value="760"/>
</dbReference>
<dbReference type="STRING" id="9796.ENSECAP00000048553"/>
<dbReference type="PaxDb" id="9796-ENSECAP00000048553"/>
<dbReference type="PeptideAtlas" id="P30441"/>
<dbReference type="GeneID" id="100034203"/>
<dbReference type="KEGG" id="ecb:100034203"/>
<dbReference type="KEGG" id="epz:103558321"/>
<dbReference type="CTD" id="567"/>
<dbReference type="HOGENOM" id="CLU_163066_0_0_1"/>
<dbReference type="InParanoid" id="P30441"/>
<dbReference type="OrthoDB" id="9949628at2759"/>
<dbReference type="TreeFam" id="TF334167"/>
<dbReference type="Proteomes" id="UP000002281">
    <property type="component" value="Chromosome 1"/>
</dbReference>
<dbReference type="Bgee" id="ENSECAG00000000685">
    <property type="expression patterns" value="Expressed in leukocyte and 23 other cell types or tissues"/>
</dbReference>
<dbReference type="GO" id="GO:0005576">
    <property type="term" value="C:extracellular region"/>
    <property type="evidence" value="ECO:0007669"/>
    <property type="project" value="UniProtKB-SubCell"/>
</dbReference>
<dbReference type="GO" id="GO:0031902">
    <property type="term" value="C:late endosome membrane"/>
    <property type="evidence" value="ECO:0000318"/>
    <property type="project" value="GO_Central"/>
</dbReference>
<dbReference type="GO" id="GO:0005765">
    <property type="term" value="C:lysosomal membrane"/>
    <property type="evidence" value="ECO:0000318"/>
    <property type="project" value="GO_Central"/>
</dbReference>
<dbReference type="GO" id="GO:0042612">
    <property type="term" value="C:MHC class I protein complex"/>
    <property type="evidence" value="ECO:0007669"/>
    <property type="project" value="UniProtKB-KW"/>
</dbReference>
<dbReference type="GO" id="GO:0042613">
    <property type="term" value="C:MHC class II protein complex"/>
    <property type="evidence" value="ECO:0000318"/>
    <property type="project" value="GO_Central"/>
</dbReference>
<dbReference type="GO" id="GO:0023026">
    <property type="term" value="F:MHC class II protein complex binding"/>
    <property type="evidence" value="ECO:0000318"/>
    <property type="project" value="GO_Central"/>
</dbReference>
<dbReference type="GO" id="GO:0042605">
    <property type="term" value="F:peptide antigen binding"/>
    <property type="evidence" value="ECO:0000318"/>
    <property type="project" value="GO_Central"/>
</dbReference>
<dbReference type="GO" id="GO:0019886">
    <property type="term" value="P:antigen processing and presentation of exogenous peptide antigen via MHC class II"/>
    <property type="evidence" value="ECO:0000318"/>
    <property type="project" value="GO_Central"/>
</dbReference>
<dbReference type="GO" id="GO:0002474">
    <property type="term" value="P:antigen processing and presentation of peptide antigen via MHC class I"/>
    <property type="evidence" value="ECO:0007669"/>
    <property type="project" value="UniProtKB-KW"/>
</dbReference>
<dbReference type="GO" id="GO:0006955">
    <property type="term" value="P:immune response"/>
    <property type="evidence" value="ECO:0007669"/>
    <property type="project" value="InterPro"/>
</dbReference>
<dbReference type="GO" id="GO:0002503">
    <property type="term" value="P:peptide antigen assembly with MHC class II protein complex"/>
    <property type="evidence" value="ECO:0000318"/>
    <property type="project" value="GO_Central"/>
</dbReference>
<dbReference type="GO" id="GO:0050778">
    <property type="term" value="P:positive regulation of immune response"/>
    <property type="evidence" value="ECO:0000318"/>
    <property type="project" value="GO_Central"/>
</dbReference>
<dbReference type="GO" id="GO:0050870">
    <property type="term" value="P:positive regulation of T cell activation"/>
    <property type="evidence" value="ECO:0000318"/>
    <property type="project" value="GO_Central"/>
</dbReference>
<dbReference type="CDD" id="cd05770">
    <property type="entry name" value="IgC1_beta2m"/>
    <property type="match status" value="1"/>
</dbReference>
<dbReference type="FunFam" id="2.60.40.10:FF:001005">
    <property type="entry name" value="Beta-2-microglobulin"/>
    <property type="match status" value="1"/>
</dbReference>
<dbReference type="Gene3D" id="2.60.40.10">
    <property type="entry name" value="Immunoglobulins"/>
    <property type="match status" value="1"/>
</dbReference>
<dbReference type="InterPro" id="IPR015707">
    <property type="entry name" value="B2Microglobulin"/>
</dbReference>
<dbReference type="InterPro" id="IPR007110">
    <property type="entry name" value="Ig-like_dom"/>
</dbReference>
<dbReference type="InterPro" id="IPR036179">
    <property type="entry name" value="Ig-like_dom_sf"/>
</dbReference>
<dbReference type="InterPro" id="IPR013783">
    <property type="entry name" value="Ig-like_fold"/>
</dbReference>
<dbReference type="InterPro" id="IPR003006">
    <property type="entry name" value="Ig/MHC_CS"/>
</dbReference>
<dbReference type="InterPro" id="IPR003597">
    <property type="entry name" value="Ig_C1-set"/>
</dbReference>
<dbReference type="InterPro" id="IPR050160">
    <property type="entry name" value="MHC/Immunoglobulin"/>
</dbReference>
<dbReference type="PANTHER" id="PTHR19944:SF62">
    <property type="entry name" value="BETA-2-MICROGLOBULIN"/>
    <property type="match status" value="1"/>
</dbReference>
<dbReference type="PANTHER" id="PTHR19944">
    <property type="entry name" value="MHC CLASS II-RELATED"/>
    <property type="match status" value="1"/>
</dbReference>
<dbReference type="Pfam" id="PF07654">
    <property type="entry name" value="C1-set"/>
    <property type="match status" value="1"/>
</dbReference>
<dbReference type="SMART" id="SM00407">
    <property type="entry name" value="IGc1"/>
    <property type="match status" value="1"/>
</dbReference>
<dbReference type="SUPFAM" id="SSF48726">
    <property type="entry name" value="Immunoglobulin"/>
    <property type="match status" value="1"/>
</dbReference>
<dbReference type="PROSITE" id="PS50835">
    <property type="entry name" value="IG_LIKE"/>
    <property type="match status" value="1"/>
</dbReference>
<dbReference type="PROSITE" id="PS00290">
    <property type="entry name" value="IG_MHC"/>
    <property type="match status" value="1"/>
</dbReference>
<proteinExistence type="evidence at protein level"/>
<feature type="signal peptide" evidence="1">
    <location>
        <begin position="1"/>
        <end position="20"/>
    </location>
</feature>
<feature type="chain" id="PRO_0000018778" description="Beta-2-microglobulin">
    <location>
        <begin position="21"/>
        <end position="118"/>
    </location>
</feature>
<feature type="domain" description="Ig-like C1-type">
    <location>
        <begin position="22"/>
        <end position="115"/>
    </location>
</feature>
<feature type="disulfide bond" evidence="2">
    <location>
        <begin position="45"/>
        <end position="99"/>
    </location>
</feature>
<gene>
    <name type="primary">B2M</name>
</gene>
<comment type="function">
    <text evidence="1">Component of the class I major histocompatibility complex (MHC). Involved in the presentation of peptide antigens to the immune system (By similarity).</text>
</comment>
<comment type="subunit">
    <text evidence="1">Heterodimer of an alpha chain and a beta chain. Beta-2-microglobulin is the beta-chain of major histocompatibility complex class I molecules (By similarity).</text>
</comment>
<comment type="subcellular location">
    <subcellularLocation>
        <location evidence="1">Secreted</location>
    </subcellularLocation>
</comment>
<comment type="similarity">
    <text evidence="3">Belongs to the beta-2-microglobulin family.</text>
</comment>
<keyword id="KW-1015">Disulfide bond</keyword>
<keyword id="KW-0391">Immunity</keyword>
<keyword id="KW-0393">Immunoglobulin domain</keyword>
<keyword id="KW-0490">MHC I</keyword>
<keyword id="KW-1185">Reference proteome</keyword>
<keyword id="KW-0964">Secreted</keyword>
<keyword id="KW-0732">Signal</keyword>
<sequence>MARVVALVLLGLLSLTGLEAVPRVPKVQVYSRHPAENGKPNFLNCYVSGFHPPEIEIDLLKNGEKMKVDRSDLSFSKDWSFYLLVHTDFTPNGVDEYSCRVQHSTLKDPLIVKWDRDL</sequence>
<protein>
    <recommendedName>
        <fullName>Beta-2-microglobulin</fullName>
    </recommendedName>
</protein>
<evidence type="ECO:0000250" key="1"/>
<evidence type="ECO:0000255" key="2">
    <source>
        <dbReference type="PROSITE-ProRule" id="PRU00114"/>
    </source>
</evidence>
<evidence type="ECO:0000305" key="3"/>
<reference key="1">
    <citation type="journal article" date="1993" name="Immunogenetics">
        <title>Nucleotide sequence of horse beta 2-microglobulin cDNA.</title>
        <authorList>
            <person name="Ellis S.A."/>
            <person name="Martin A.J."/>
        </authorList>
    </citation>
    <scope>NUCLEOTIDE SEQUENCE [MRNA]</scope>
</reference>
<reference key="2">
    <citation type="journal article" date="2003" name="Immunogenetics">
        <title>Characterization of the beta(2)-microglobulin gene of the horse.</title>
        <authorList>
            <person name="Tallmadge R.L."/>
            <person name="Lear T.L."/>
            <person name="Johnson A.K."/>
            <person name="Guerin G."/>
            <person name="Millon L.V."/>
            <person name="Carpenter S.L."/>
            <person name="Antczak D.F."/>
        </authorList>
    </citation>
    <scope>NUCLEOTIDE SEQUENCE [GENOMIC DNA]</scope>
    <scope>CHARACTERIZATION</scope>
</reference>
<name>B2MG_HORSE</name>
<accession>P30441</accession>
<accession>Q540U6</accession>
<accession>Q6YLH6</accession>